<evidence type="ECO:0000255" key="1">
    <source>
        <dbReference type="HAMAP-Rule" id="MF_00375"/>
    </source>
</evidence>
<sequence>MSSPSRSVSLFERAQKTIPGGVNSPVRAFRSVGGTPRFIAKAAGPYLWDADGTRLIDYVGSWGPMIVGHAHPEVVRAVQQVAADSFSFGAPTEAEVVMAETLCELVPSIEQVRLVSSGTEATMSALRLARGFTGRDLIVKFEGCYHGHADSLLVKAGSGLLTFADTTQNAPSSAGVPEDVVKHTMVLPYNDADALREAFARHGKEIAAVIVEPVAGNMNLVRATAAFLQAMRALCTEHGAVLIFDEVMTGFRVALGCAQALYGITPDLTCLGKVIGGGMPAAAFGGRRDIMGFLAPLGSVYQAGTLSGNPLAVAAGVTTLRLIAADGFHDRLAAQTRKLVDGLAGIARDAGVPFAADSVGGMFGLYFREGVPTSFAEVTQSDVGRFNAFFHAMLAEGVYLAPSAFEAGFVSSMHDDAVLEATFEAARRAFKAV</sequence>
<feature type="chain" id="PRO_0000243610" description="Glutamate-1-semialdehyde 2,1-aminomutase">
    <location>
        <begin position="1"/>
        <end position="433"/>
    </location>
</feature>
<feature type="modified residue" description="N6-(pyridoxal phosphate)lysine" evidence="1">
    <location>
        <position position="273"/>
    </location>
</feature>
<name>GSA_RALN1</name>
<accession>Q8Y1M4</accession>
<keyword id="KW-0963">Cytoplasm</keyword>
<keyword id="KW-0413">Isomerase</keyword>
<keyword id="KW-0627">Porphyrin biosynthesis</keyword>
<keyword id="KW-0663">Pyridoxal phosphate</keyword>
<keyword id="KW-1185">Reference proteome</keyword>
<comment type="catalytic activity">
    <reaction evidence="1">
        <text>(S)-4-amino-5-oxopentanoate = 5-aminolevulinate</text>
        <dbReference type="Rhea" id="RHEA:14265"/>
        <dbReference type="ChEBI" id="CHEBI:57501"/>
        <dbReference type="ChEBI" id="CHEBI:356416"/>
        <dbReference type="EC" id="5.4.3.8"/>
    </reaction>
</comment>
<comment type="cofactor">
    <cofactor evidence="1">
        <name>pyridoxal 5'-phosphate</name>
        <dbReference type="ChEBI" id="CHEBI:597326"/>
    </cofactor>
</comment>
<comment type="pathway">
    <text evidence="1">Porphyrin-containing compound metabolism; protoporphyrin-IX biosynthesis; 5-aminolevulinate from L-glutamyl-tRNA(Glu): step 2/2.</text>
</comment>
<comment type="subunit">
    <text evidence="1">Homodimer.</text>
</comment>
<comment type="subcellular location">
    <subcellularLocation>
        <location evidence="1">Cytoplasm</location>
    </subcellularLocation>
</comment>
<comment type="similarity">
    <text evidence="1">Belongs to the class-III pyridoxal-phosphate-dependent aminotransferase family. HemL subfamily.</text>
</comment>
<dbReference type="EC" id="5.4.3.8" evidence="1"/>
<dbReference type="EMBL" id="AL646052">
    <property type="protein sequence ID" value="CAD14196.1"/>
    <property type="molecule type" value="Genomic_DNA"/>
</dbReference>
<dbReference type="RefSeq" id="WP_011000623.1">
    <property type="nucleotide sequence ID" value="NC_003295.1"/>
</dbReference>
<dbReference type="SMR" id="Q8Y1M4"/>
<dbReference type="STRING" id="267608.RSc0666"/>
<dbReference type="EnsemblBacteria" id="CAD14196">
    <property type="protein sequence ID" value="CAD14196"/>
    <property type="gene ID" value="RSc0666"/>
</dbReference>
<dbReference type="KEGG" id="rso:RSc0666"/>
<dbReference type="eggNOG" id="COG0001">
    <property type="taxonomic scope" value="Bacteria"/>
</dbReference>
<dbReference type="HOGENOM" id="CLU_016922_1_5_4"/>
<dbReference type="UniPathway" id="UPA00251">
    <property type="reaction ID" value="UER00317"/>
</dbReference>
<dbReference type="Proteomes" id="UP000001436">
    <property type="component" value="Chromosome"/>
</dbReference>
<dbReference type="GO" id="GO:0005737">
    <property type="term" value="C:cytoplasm"/>
    <property type="evidence" value="ECO:0007669"/>
    <property type="project" value="UniProtKB-SubCell"/>
</dbReference>
<dbReference type="GO" id="GO:0042286">
    <property type="term" value="F:glutamate-1-semialdehyde 2,1-aminomutase activity"/>
    <property type="evidence" value="ECO:0007669"/>
    <property type="project" value="UniProtKB-UniRule"/>
</dbReference>
<dbReference type="GO" id="GO:0030170">
    <property type="term" value="F:pyridoxal phosphate binding"/>
    <property type="evidence" value="ECO:0007669"/>
    <property type="project" value="InterPro"/>
</dbReference>
<dbReference type="GO" id="GO:0008483">
    <property type="term" value="F:transaminase activity"/>
    <property type="evidence" value="ECO:0007669"/>
    <property type="project" value="InterPro"/>
</dbReference>
<dbReference type="GO" id="GO:0006782">
    <property type="term" value="P:protoporphyrinogen IX biosynthetic process"/>
    <property type="evidence" value="ECO:0007669"/>
    <property type="project" value="UniProtKB-UniRule"/>
</dbReference>
<dbReference type="CDD" id="cd00610">
    <property type="entry name" value="OAT_like"/>
    <property type="match status" value="1"/>
</dbReference>
<dbReference type="FunFam" id="3.40.640.10:FF:000021">
    <property type="entry name" value="Glutamate-1-semialdehyde 2,1-aminomutase"/>
    <property type="match status" value="1"/>
</dbReference>
<dbReference type="Gene3D" id="3.90.1150.10">
    <property type="entry name" value="Aspartate Aminotransferase, domain 1"/>
    <property type="match status" value="1"/>
</dbReference>
<dbReference type="Gene3D" id="3.40.640.10">
    <property type="entry name" value="Type I PLP-dependent aspartate aminotransferase-like (Major domain)"/>
    <property type="match status" value="1"/>
</dbReference>
<dbReference type="HAMAP" id="MF_00375">
    <property type="entry name" value="HemL_aminotrans_3"/>
    <property type="match status" value="1"/>
</dbReference>
<dbReference type="InterPro" id="IPR004639">
    <property type="entry name" value="4pyrrol_synth_GluAld_NH2Trfase"/>
</dbReference>
<dbReference type="InterPro" id="IPR005814">
    <property type="entry name" value="Aminotrans_3"/>
</dbReference>
<dbReference type="InterPro" id="IPR049704">
    <property type="entry name" value="Aminotrans_3_PPA_site"/>
</dbReference>
<dbReference type="InterPro" id="IPR015424">
    <property type="entry name" value="PyrdxlP-dep_Trfase"/>
</dbReference>
<dbReference type="InterPro" id="IPR015421">
    <property type="entry name" value="PyrdxlP-dep_Trfase_major"/>
</dbReference>
<dbReference type="InterPro" id="IPR015422">
    <property type="entry name" value="PyrdxlP-dep_Trfase_small"/>
</dbReference>
<dbReference type="NCBIfam" id="TIGR00713">
    <property type="entry name" value="hemL"/>
    <property type="match status" value="1"/>
</dbReference>
<dbReference type="NCBIfam" id="NF000818">
    <property type="entry name" value="PRK00062.1"/>
    <property type="match status" value="1"/>
</dbReference>
<dbReference type="PANTHER" id="PTHR43713">
    <property type="entry name" value="GLUTAMATE-1-SEMIALDEHYDE 2,1-AMINOMUTASE"/>
    <property type="match status" value="1"/>
</dbReference>
<dbReference type="PANTHER" id="PTHR43713:SF3">
    <property type="entry name" value="GLUTAMATE-1-SEMIALDEHYDE 2,1-AMINOMUTASE 1, CHLOROPLASTIC-RELATED"/>
    <property type="match status" value="1"/>
</dbReference>
<dbReference type="Pfam" id="PF00202">
    <property type="entry name" value="Aminotran_3"/>
    <property type="match status" value="1"/>
</dbReference>
<dbReference type="SUPFAM" id="SSF53383">
    <property type="entry name" value="PLP-dependent transferases"/>
    <property type="match status" value="1"/>
</dbReference>
<dbReference type="PROSITE" id="PS00600">
    <property type="entry name" value="AA_TRANSFER_CLASS_3"/>
    <property type="match status" value="1"/>
</dbReference>
<gene>
    <name evidence="1" type="primary">hemL</name>
    <name type="ordered locus">RSc0666</name>
</gene>
<proteinExistence type="inferred from homology"/>
<reference key="1">
    <citation type="journal article" date="2002" name="Nature">
        <title>Genome sequence of the plant pathogen Ralstonia solanacearum.</title>
        <authorList>
            <person name="Salanoubat M."/>
            <person name="Genin S."/>
            <person name="Artiguenave F."/>
            <person name="Gouzy J."/>
            <person name="Mangenot S."/>
            <person name="Arlat M."/>
            <person name="Billault A."/>
            <person name="Brottier P."/>
            <person name="Camus J.-C."/>
            <person name="Cattolico L."/>
            <person name="Chandler M."/>
            <person name="Choisne N."/>
            <person name="Claudel-Renard C."/>
            <person name="Cunnac S."/>
            <person name="Demange N."/>
            <person name="Gaspin C."/>
            <person name="Lavie M."/>
            <person name="Moisan A."/>
            <person name="Robert C."/>
            <person name="Saurin W."/>
            <person name="Schiex T."/>
            <person name="Siguier P."/>
            <person name="Thebault P."/>
            <person name="Whalen M."/>
            <person name="Wincker P."/>
            <person name="Levy M."/>
            <person name="Weissenbach J."/>
            <person name="Boucher C.A."/>
        </authorList>
    </citation>
    <scope>NUCLEOTIDE SEQUENCE [LARGE SCALE GENOMIC DNA]</scope>
    <source>
        <strain>ATCC BAA-1114 / GMI1000</strain>
    </source>
</reference>
<organism>
    <name type="scientific">Ralstonia nicotianae (strain ATCC BAA-1114 / GMI1000)</name>
    <name type="common">Ralstonia solanacearum</name>
    <dbReference type="NCBI Taxonomy" id="267608"/>
    <lineage>
        <taxon>Bacteria</taxon>
        <taxon>Pseudomonadati</taxon>
        <taxon>Pseudomonadota</taxon>
        <taxon>Betaproteobacteria</taxon>
        <taxon>Burkholderiales</taxon>
        <taxon>Burkholderiaceae</taxon>
        <taxon>Ralstonia</taxon>
        <taxon>Ralstonia solanacearum species complex</taxon>
    </lineage>
</organism>
<protein>
    <recommendedName>
        <fullName evidence="1">Glutamate-1-semialdehyde 2,1-aminomutase</fullName>
        <shortName evidence="1">GSA</shortName>
        <ecNumber evidence="1">5.4.3.8</ecNumber>
    </recommendedName>
    <alternativeName>
        <fullName evidence="1">Glutamate-1-semialdehyde aminotransferase</fullName>
        <shortName evidence="1">GSA-AT</shortName>
    </alternativeName>
</protein>